<protein>
    <recommendedName>
        <fullName evidence="1">tRNA N6-adenosine threonylcarbamoyltransferase</fullName>
        <ecNumber evidence="1">2.3.1.234</ecNumber>
    </recommendedName>
    <alternativeName>
        <fullName evidence="1">N6-L-threonylcarbamoyladenine synthase</fullName>
        <shortName evidence="1">t(6)A synthase</shortName>
    </alternativeName>
    <alternativeName>
        <fullName evidence="1">t(6)A37 threonylcarbamoyladenosine biosynthesis protein TsaD</fullName>
    </alternativeName>
    <alternativeName>
        <fullName evidence="1">tRNA threonylcarbamoyladenosine biosynthesis protein TsaD</fullName>
    </alternativeName>
</protein>
<proteinExistence type="inferred from homology"/>
<keyword id="KW-0012">Acyltransferase</keyword>
<keyword id="KW-0963">Cytoplasm</keyword>
<keyword id="KW-0408">Iron</keyword>
<keyword id="KW-0479">Metal-binding</keyword>
<keyword id="KW-0808">Transferase</keyword>
<keyword id="KW-0819">tRNA processing</keyword>
<name>TSAD_VIBA3</name>
<comment type="function">
    <text evidence="1">Required for the formation of a threonylcarbamoyl group on adenosine at position 37 (t(6)A37) in tRNAs that read codons beginning with adenine. Is involved in the transfer of the threonylcarbamoyl moiety of threonylcarbamoyl-AMP (TC-AMP) to the N6 group of A37, together with TsaE and TsaB. TsaD likely plays a direct catalytic role in this reaction.</text>
</comment>
<comment type="catalytic activity">
    <reaction evidence="1">
        <text>L-threonylcarbamoyladenylate + adenosine(37) in tRNA = N(6)-L-threonylcarbamoyladenosine(37) in tRNA + AMP + H(+)</text>
        <dbReference type="Rhea" id="RHEA:37059"/>
        <dbReference type="Rhea" id="RHEA-COMP:10162"/>
        <dbReference type="Rhea" id="RHEA-COMP:10163"/>
        <dbReference type="ChEBI" id="CHEBI:15378"/>
        <dbReference type="ChEBI" id="CHEBI:73682"/>
        <dbReference type="ChEBI" id="CHEBI:74411"/>
        <dbReference type="ChEBI" id="CHEBI:74418"/>
        <dbReference type="ChEBI" id="CHEBI:456215"/>
        <dbReference type="EC" id="2.3.1.234"/>
    </reaction>
</comment>
<comment type="cofactor">
    <cofactor evidence="1">
        <name>Fe(2+)</name>
        <dbReference type="ChEBI" id="CHEBI:29033"/>
    </cofactor>
    <text evidence="1">Binds 1 Fe(2+) ion per subunit.</text>
</comment>
<comment type="subcellular location">
    <subcellularLocation>
        <location evidence="1">Cytoplasm</location>
    </subcellularLocation>
</comment>
<comment type="similarity">
    <text evidence="1">Belongs to the KAE1 / TsaD family.</text>
</comment>
<reference key="1">
    <citation type="submission" date="2009-02" db="EMBL/GenBank/DDBJ databases">
        <title>Vibrio splendidus str. LGP32 complete genome.</title>
        <authorList>
            <person name="Mazel D."/>
            <person name="Le Roux F."/>
        </authorList>
    </citation>
    <scope>NUCLEOTIDE SEQUENCE [LARGE SCALE GENOMIC DNA]</scope>
    <source>
        <strain>LGP32</strain>
    </source>
</reference>
<sequence>MRIIGIETSCDETGIAIYDDEQGLLSHQLYSQVKLHADYGGVVPELASRDHVKKTIPLIKAALAEANLTSKDIDGVAYTAGPGLVGALLVGATIGRSIAYAWGVPAVPVHHMEGHLLAPMLEDNPPPFPFVALLVSGGHTMMVEVKGIGEYRILGESIDDAAGEAFDKTAKLMGLDYPGGPLLSRLAEKGTPGRFKFPRPMTDRPGLDMSFSGLKTFAANTIRANDNDDQTRADIAYAFQEAVCATLVIKCKRALVETGMKRIVIAGGVSANKQLRVELEALAKKIGGEVYYPRTEFCTDNGAMIAYAGMQRLKNGETADLSVHATPRWPIDQLEPIV</sequence>
<evidence type="ECO:0000255" key="1">
    <source>
        <dbReference type="HAMAP-Rule" id="MF_01445"/>
    </source>
</evidence>
<dbReference type="EC" id="2.3.1.234" evidence="1"/>
<dbReference type="EMBL" id="FM954972">
    <property type="protein sequence ID" value="CAV17409.1"/>
    <property type="molecule type" value="Genomic_DNA"/>
</dbReference>
<dbReference type="SMR" id="B7VIH2"/>
<dbReference type="STRING" id="575788.VS_0401"/>
<dbReference type="KEGG" id="vsp:VS_0401"/>
<dbReference type="eggNOG" id="COG0533">
    <property type="taxonomic scope" value="Bacteria"/>
</dbReference>
<dbReference type="HOGENOM" id="CLU_023208_0_0_6"/>
<dbReference type="Proteomes" id="UP000009100">
    <property type="component" value="Chromosome 1"/>
</dbReference>
<dbReference type="GO" id="GO:0005737">
    <property type="term" value="C:cytoplasm"/>
    <property type="evidence" value="ECO:0007669"/>
    <property type="project" value="UniProtKB-SubCell"/>
</dbReference>
<dbReference type="GO" id="GO:0005506">
    <property type="term" value="F:iron ion binding"/>
    <property type="evidence" value="ECO:0007669"/>
    <property type="project" value="UniProtKB-UniRule"/>
</dbReference>
<dbReference type="GO" id="GO:0061711">
    <property type="term" value="F:N(6)-L-threonylcarbamoyladenine synthase activity"/>
    <property type="evidence" value="ECO:0007669"/>
    <property type="project" value="UniProtKB-EC"/>
</dbReference>
<dbReference type="GO" id="GO:0002949">
    <property type="term" value="P:tRNA threonylcarbamoyladenosine modification"/>
    <property type="evidence" value="ECO:0007669"/>
    <property type="project" value="UniProtKB-UniRule"/>
</dbReference>
<dbReference type="CDD" id="cd24133">
    <property type="entry name" value="ASKHA_NBD_TsaD_bac"/>
    <property type="match status" value="1"/>
</dbReference>
<dbReference type="FunFam" id="3.30.420.40:FF:000031">
    <property type="entry name" value="tRNA N6-adenosine threonylcarbamoyltransferase"/>
    <property type="match status" value="1"/>
</dbReference>
<dbReference type="Gene3D" id="3.30.420.40">
    <property type="match status" value="2"/>
</dbReference>
<dbReference type="HAMAP" id="MF_01445">
    <property type="entry name" value="TsaD"/>
    <property type="match status" value="1"/>
</dbReference>
<dbReference type="InterPro" id="IPR043129">
    <property type="entry name" value="ATPase_NBD"/>
</dbReference>
<dbReference type="InterPro" id="IPR000905">
    <property type="entry name" value="Gcp-like_dom"/>
</dbReference>
<dbReference type="InterPro" id="IPR017861">
    <property type="entry name" value="KAE1/TsaD"/>
</dbReference>
<dbReference type="InterPro" id="IPR017860">
    <property type="entry name" value="Peptidase_M22_CS"/>
</dbReference>
<dbReference type="InterPro" id="IPR022450">
    <property type="entry name" value="TsaD"/>
</dbReference>
<dbReference type="NCBIfam" id="TIGR00329">
    <property type="entry name" value="gcp_kae1"/>
    <property type="match status" value="1"/>
</dbReference>
<dbReference type="NCBIfam" id="TIGR03723">
    <property type="entry name" value="T6A_TsaD_YgjD"/>
    <property type="match status" value="1"/>
</dbReference>
<dbReference type="PANTHER" id="PTHR11735">
    <property type="entry name" value="TRNA N6-ADENOSINE THREONYLCARBAMOYLTRANSFERASE"/>
    <property type="match status" value="1"/>
</dbReference>
<dbReference type="PANTHER" id="PTHR11735:SF6">
    <property type="entry name" value="TRNA N6-ADENOSINE THREONYLCARBAMOYLTRANSFERASE, MITOCHONDRIAL"/>
    <property type="match status" value="1"/>
</dbReference>
<dbReference type="Pfam" id="PF00814">
    <property type="entry name" value="TsaD"/>
    <property type="match status" value="1"/>
</dbReference>
<dbReference type="PRINTS" id="PR00789">
    <property type="entry name" value="OSIALOPTASE"/>
</dbReference>
<dbReference type="SUPFAM" id="SSF53067">
    <property type="entry name" value="Actin-like ATPase domain"/>
    <property type="match status" value="2"/>
</dbReference>
<dbReference type="PROSITE" id="PS01016">
    <property type="entry name" value="GLYCOPROTEASE"/>
    <property type="match status" value="1"/>
</dbReference>
<feature type="chain" id="PRO_1000184992" description="tRNA N6-adenosine threonylcarbamoyltransferase">
    <location>
        <begin position="1"/>
        <end position="338"/>
    </location>
</feature>
<feature type="binding site" evidence="1">
    <location>
        <position position="111"/>
    </location>
    <ligand>
        <name>Fe cation</name>
        <dbReference type="ChEBI" id="CHEBI:24875"/>
    </ligand>
</feature>
<feature type="binding site" evidence="1">
    <location>
        <position position="115"/>
    </location>
    <ligand>
        <name>Fe cation</name>
        <dbReference type="ChEBI" id="CHEBI:24875"/>
    </ligand>
</feature>
<feature type="binding site" evidence="1">
    <location>
        <begin position="134"/>
        <end position="138"/>
    </location>
    <ligand>
        <name>substrate</name>
    </ligand>
</feature>
<feature type="binding site" evidence="1">
    <location>
        <position position="167"/>
    </location>
    <ligand>
        <name>substrate</name>
    </ligand>
</feature>
<feature type="binding site" evidence="1">
    <location>
        <position position="180"/>
    </location>
    <ligand>
        <name>substrate</name>
    </ligand>
</feature>
<feature type="binding site" evidence="1">
    <location>
        <position position="272"/>
    </location>
    <ligand>
        <name>substrate</name>
    </ligand>
</feature>
<feature type="binding site" evidence="1">
    <location>
        <position position="300"/>
    </location>
    <ligand>
        <name>Fe cation</name>
        <dbReference type="ChEBI" id="CHEBI:24875"/>
    </ligand>
</feature>
<gene>
    <name evidence="1" type="primary">tsaD</name>
    <name type="synonym">gcp</name>
    <name type="ordered locus">VS_0401</name>
</gene>
<accession>B7VIH2</accession>
<organism>
    <name type="scientific">Vibrio atlanticus (strain LGP32)</name>
    <name type="common">Vibrio splendidus (strain Mel32)</name>
    <dbReference type="NCBI Taxonomy" id="575788"/>
    <lineage>
        <taxon>Bacteria</taxon>
        <taxon>Pseudomonadati</taxon>
        <taxon>Pseudomonadota</taxon>
        <taxon>Gammaproteobacteria</taxon>
        <taxon>Vibrionales</taxon>
        <taxon>Vibrionaceae</taxon>
        <taxon>Vibrio</taxon>
    </lineage>
</organism>